<evidence type="ECO:0000255" key="1">
    <source>
        <dbReference type="HAMAP-Rule" id="MF_03052"/>
    </source>
</evidence>
<evidence type="ECO:0000256" key="2">
    <source>
        <dbReference type="SAM" id="MobiDB-lite"/>
    </source>
</evidence>
<feature type="chain" id="PRO_0000369361" description="Molybdopterin synthase catalytic subunit">
    <location>
        <begin position="1"/>
        <end position="196"/>
    </location>
</feature>
<feature type="region of interest" description="Disordered" evidence="2">
    <location>
        <begin position="142"/>
        <end position="196"/>
    </location>
</feature>
<feature type="compositionally biased region" description="Basic and acidic residues" evidence="2">
    <location>
        <begin position="147"/>
        <end position="168"/>
    </location>
</feature>
<feature type="binding site" evidence="1">
    <location>
        <begin position="110"/>
        <end position="111"/>
    </location>
    <ligand>
        <name>substrate</name>
    </ligand>
</feature>
<feature type="binding site" evidence="1">
    <location>
        <position position="126"/>
    </location>
    <ligand>
        <name>substrate</name>
    </ligand>
</feature>
<feature type="binding site" evidence="1">
    <location>
        <begin position="133"/>
        <end position="135"/>
    </location>
    <ligand>
        <name>substrate</name>
    </ligand>
</feature>
<protein>
    <recommendedName>
        <fullName evidence="1">Molybdopterin synthase catalytic subunit</fullName>
        <ecNumber evidence="1">2.8.1.12</ecNumber>
    </recommendedName>
    <alternativeName>
        <fullName evidence="1">Common component for nitrate reductase and xanthine dehydrogenase protein H</fullName>
    </alternativeName>
    <alternativeName>
        <fullName evidence="1">Molybdenum cofactor synthesis protein 2 large subunit</fullName>
    </alternativeName>
    <alternativeName>
        <fullName evidence="1">Molybdenum cofactor synthesis protein 2B</fullName>
        <shortName evidence="1">MOCS2B</shortName>
    </alternativeName>
</protein>
<comment type="function">
    <text evidence="1">Catalytic subunit of the molybdopterin synthase complex, a complex that catalyzes the conversion of precursor Z into molybdopterin. Acts by mediating the incorporation of 2 sulfur atoms from thiocarboxylated MOCS2A into precursor Z to generate a dithiolene group.</text>
</comment>
<comment type="catalytic activity">
    <reaction evidence="1">
        <text>2 [molybdopterin-synthase sulfur-carrier protein]-C-terminal-Gly-aminoethanethioate + cyclic pyranopterin phosphate + H2O = molybdopterin + 2 [molybdopterin-synthase sulfur-carrier protein]-C-terminal Gly-Gly + 2 H(+)</text>
        <dbReference type="Rhea" id="RHEA:26333"/>
        <dbReference type="Rhea" id="RHEA-COMP:12202"/>
        <dbReference type="Rhea" id="RHEA-COMP:19907"/>
        <dbReference type="ChEBI" id="CHEBI:15377"/>
        <dbReference type="ChEBI" id="CHEBI:15378"/>
        <dbReference type="ChEBI" id="CHEBI:58698"/>
        <dbReference type="ChEBI" id="CHEBI:59648"/>
        <dbReference type="ChEBI" id="CHEBI:90778"/>
        <dbReference type="ChEBI" id="CHEBI:232372"/>
        <dbReference type="EC" id="2.8.1.12"/>
    </reaction>
</comment>
<comment type="pathway">
    <text evidence="1">Cofactor biosynthesis; molybdopterin biosynthesis.</text>
</comment>
<comment type="subunit">
    <text evidence="1">Heterotetramer; composed of 2 small (MOCS2A) and 2 large (MOCS2B) subunits.</text>
</comment>
<comment type="subcellular location">
    <subcellularLocation>
        <location evidence="1">Cytoplasm</location>
    </subcellularLocation>
</comment>
<comment type="similarity">
    <text evidence="1">Belongs to the MoaE family. MOCS2B subfamily.</text>
</comment>
<name>MOC2B_SCLS1</name>
<reference key="1">
    <citation type="journal article" date="2011" name="PLoS Genet.">
        <title>Genomic analysis of the necrotrophic fungal pathogens Sclerotinia sclerotiorum and Botrytis cinerea.</title>
        <authorList>
            <person name="Amselem J."/>
            <person name="Cuomo C.A."/>
            <person name="van Kan J.A.L."/>
            <person name="Viaud M."/>
            <person name="Benito E.P."/>
            <person name="Couloux A."/>
            <person name="Coutinho P.M."/>
            <person name="de Vries R.P."/>
            <person name="Dyer P.S."/>
            <person name="Fillinger S."/>
            <person name="Fournier E."/>
            <person name="Gout L."/>
            <person name="Hahn M."/>
            <person name="Kohn L."/>
            <person name="Lapalu N."/>
            <person name="Plummer K.M."/>
            <person name="Pradier J.-M."/>
            <person name="Quevillon E."/>
            <person name="Sharon A."/>
            <person name="Simon A."/>
            <person name="ten Have A."/>
            <person name="Tudzynski B."/>
            <person name="Tudzynski P."/>
            <person name="Wincker P."/>
            <person name="Andrew M."/>
            <person name="Anthouard V."/>
            <person name="Beever R.E."/>
            <person name="Beffa R."/>
            <person name="Benoit I."/>
            <person name="Bouzid O."/>
            <person name="Brault B."/>
            <person name="Chen Z."/>
            <person name="Choquer M."/>
            <person name="Collemare J."/>
            <person name="Cotton P."/>
            <person name="Danchin E.G."/>
            <person name="Da Silva C."/>
            <person name="Gautier A."/>
            <person name="Giraud C."/>
            <person name="Giraud T."/>
            <person name="Gonzalez C."/>
            <person name="Grossetete S."/>
            <person name="Gueldener U."/>
            <person name="Henrissat B."/>
            <person name="Howlett B.J."/>
            <person name="Kodira C."/>
            <person name="Kretschmer M."/>
            <person name="Lappartient A."/>
            <person name="Leroch M."/>
            <person name="Levis C."/>
            <person name="Mauceli E."/>
            <person name="Neuveglise C."/>
            <person name="Oeser B."/>
            <person name="Pearson M."/>
            <person name="Poulain J."/>
            <person name="Poussereau N."/>
            <person name="Quesneville H."/>
            <person name="Rascle C."/>
            <person name="Schumacher J."/>
            <person name="Segurens B."/>
            <person name="Sexton A."/>
            <person name="Silva E."/>
            <person name="Sirven C."/>
            <person name="Soanes D.M."/>
            <person name="Talbot N.J."/>
            <person name="Templeton M."/>
            <person name="Yandava C."/>
            <person name="Yarden O."/>
            <person name="Zeng Q."/>
            <person name="Rollins J.A."/>
            <person name="Lebrun M.-H."/>
            <person name="Dickman M."/>
        </authorList>
    </citation>
    <scope>NUCLEOTIDE SEQUENCE [LARGE SCALE GENOMIC DNA]</scope>
    <source>
        <strain>ATCC 18683 / 1980 / Ss-1</strain>
    </source>
</reference>
<gene>
    <name evidence="1" type="primary">cnxH</name>
    <name type="ORF">SS1G_09312</name>
</gene>
<dbReference type="EC" id="2.8.1.12" evidence="1"/>
<dbReference type="EMBL" id="CH476633">
    <property type="protein sequence ID" value="EDN93446.1"/>
    <property type="molecule type" value="Genomic_DNA"/>
</dbReference>
<dbReference type="RefSeq" id="XP_001589591.1">
    <property type="nucleotide sequence ID" value="XM_001589541.1"/>
</dbReference>
<dbReference type="SMR" id="A7EVF4"/>
<dbReference type="STRING" id="665079.A7EVF4"/>
<dbReference type="EnsemblFungi" id="EDN93446">
    <property type="protein sequence ID" value="EDN93446"/>
    <property type="gene ID" value="SS1G_09312"/>
</dbReference>
<dbReference type="GeneID" id="5485824"/>
<dbReference type="KEGG" id="ssl:SS1G_09312"/>
<dbReference type="VEuPathDB" id="FungiDB:sscle_15g105900"/>
<dbReference type="eggNOG" id="KOG3307">
    <property type="taxonomic scope" value="Eukaryota"/>
</dbReference>
<dbReference type="HOGENOM" id="CLU_089568_3_0_1"/>
<dbReference type="InParanoid" id="A7EVF4"/>
<dbReference type="OMA" id="WKHQFFA"/>
<dbReference type="OrthoDB" id="5531344at2759"/>
<dbReference type="UniPathway" id="UPA00344"/>
<dbReference type="Proteomes" id="UP000001312">
    <property type="component" value="Unassembled WGS sequence"/>
</dbReference>
<dbReference type="GO" id="GO:0005829">
    <property type="term" value="C:cytosol"/>
    <property type="evidence" value="ECO:0000318"/>
    <property type="project" value="GO_Central"/>
</dbReference>
<dbReference type="GO" id="GO:1990140">
    <property type="term" value="C:molybdopterin synthase complex"/>
    <property type="evidence" value="ECO:0000250"/>
    <property type="project" value="UniProtKB"/>
</dbReference>
<dbReference type="GO" id="GO:0030366">
    <property type="term" value="F:molybdopterin synthase activity"/>
    <property type="evidence" value="ECO:0007669"/>
    <property type="project" value="UniProtKB-UniRule"/>
</dbReference>
<dbReference type="GO" id="GO:0006777">
    <property type="term" value="P:Mo-molybdopterin cofactor biosynthetic process"/>
    <property type="evidence" value="ECO:0000250"/>
    <property type="project" value="UniProtKB"/>
</dbReference>
<dbReference type="CDD" id="cd00756">
    <property type="entry name" value="MoaE"/>
    <property type="match status" value="1"/>
</dbReference>
<dbReference type="FunFam" id="3.90.1170.40:FF:000003">
    <property type="entry name" value="Molybdopterin converting factor subunit 2"/>
    <property type="match status" value="1"/>
</dbReference>
<dbReference type="Gene3D" id="3.90.1170.40">
    <property type="entry name" value="Molybdopterin biosynthesis MoaE subunit"/>
    <property type="match status" value="1"/>
</dbReference>
<dbReference type="HAMAP" id="MF_03052">
    <property type="entry name" value="MOC2B"/>
    <property type="match status" value="1"/>
</dbReference>
<dbReference type="InterPro" id="IPR036563">
    <property type="entry name" value="MoaE_sf"/>
</dbReference>
<dbReference type="InterPro" id="IPR028888">
    <property type="entry name" value="MOCS2B_euk"/>
</dbReference>
<dbReference type="InterPro" id="IPR003448">
    <property type="entry name" value="Mopterin_biosynth_MoaE"/>
</dbReference>
<dbReference type="PANTHER" id="PTHR23404">
    <property type="entry name" value="MOLYBDOPTERIN SYNTHASE RELATED"/>
    <property type="match status" value="1"/>
</dbReference>
<dbReference type="Pfam" id="PF02391">
    <property type="entry name" value="MoaE"/>
    <property type="match status" value="1"/>
</dbReference>
<dbReference type="SUPFAM" id="SSF54690">
    <property type="entry name" value="Molybdopterin synthase subunit MoaE"/>
    <property type="match status" value="1"/>
</dbReference>
<accession>A7EVF4</accession>
<organism>
    <name type="scientific">Sclerotinia sclerotiorum (strain ATCC 18683 / 1980 / Ss-1)</name>
    <name type="common">White mold</name>
    <name type="synonym">Whetzelinia sclerotiorum</name>
    <dbReference type="NCBI Taxonomy" id="665079"/>
    <lineage>
        <taxon>Eukaryota</taxon>
        <taxon>Fungi</taxon>
        <taxon>Dikarya</taxon>
        <taxon>Ascomycota</taxon>
        <taxon>Pezizomycotina</taxon>
        <taxon>Leotiomycetes</taxon>
        <taxon>Helotiales</taxon>
        <taxon>Sclerotiniaceae</taxon>
        <taxon>Sclerotinia</taxon>
    </lineage>
</organism>
<proteinExistence type="inferred from homology"/>
<sequence>MASSKELIEENCYVALTHEHLDAKVMMDKVRSPKAGAIVLFAGTTRDNFGGKPVKELQYTSYEPRALQSMLSICKTILHKHSLTSIAMIHRLGVVPIGEESILITVSSPHRQAAWRAGEEALEECKEKVEVWKKEEFGGEEGGIWRANRDGAVGERVDEDEEKKKPDMGPHGPILRPSRPGERGHGPVVRNHQLGS</sequence>
<keyword id="KW-0963">Cytoplasm</keyword>
<keyword id="KW-0501">Molybdenum cofactor biosynthesis</keyword>
<keyword id="KW-1185">Reference proteome</keyword>
<keyword id="KW-0808">Transferase</keyword>